<comment type="function">
    <text evidence="1">Catalytic subunit of the tagatose-1,6-bisphosphate aldolase KbaYZ, which catalyzes the reversible aldol condensation of dihydroxyacetone phosphate (DHAP or glycerone-phosphate) with glyceraldehyde 3-phosphate (G3P) to produce tagatose 1,6-bisphosphate (TBP). Requires KbaZ subunit for full activity and stability.</text>
</comment>
<comment type="catalytic activity">
    <reaction evidence="1">
        <text>D-tagatofuranose 1,6-bisphosphate = D-glyceraldehyde 3-phosphate + dihydroxyacetone phosphate</text>
        <dbReference type="Rhea" id="RHEA:22948"/>
        <dbReference type="ChEBI" id="CHEBI:57642"/>
        <dbReference type="ChEBI" id="CHEBI:58694"/>
        <dbReference type="ChEBI" id="CHEBI:59776"/>
        <dbReference type="EC" id="4.1.2.40"/>
    </reaction>
</comment>
<comment type="cofactor">
    <cofactor evidence="1">
        <name>Zn(2+)</name>
        <dbReference type="ChEBI" id="CHEBI:29105"/>
    </cofactor>
    <text evidence="1">Binds 1 zinc ion per subunit.</text>
</comment>
<comment type="pathway">
    <text evidence="1">Carbohydrate metabolism; D-tagatose 6-phosphate degradation; D-glyceraldehyde 3-phosphate and glycerone phosphate from D-tagatose 6-phosphate: step 2/2.</text>
</comment>
<comment type="subunit">
    <text evidence="1">Homotetramer. Forms a complex with KbaZ.</text>
</comment>
<comment type="similarity">
    <text evidence="1">Belongs to the class II fructose-bisphosphate aldolase family. TagBP aldolase KbaY subfamily.</text>
</comment>
<proteinExistence type="inferred from homology"/>
<feature type="chain" id="PRO_0000355326" description="D-tagatose-1,6-bisphosphate aldolase subunit KbaY">
    <location>
        <begin position="1"/>
        <end position="286"/>
    </location>
</feature>
<feature type="active site" description="Proton donor" evidence="1">
    <location>
        <position position="82"/>
    </location>
</feature>
<feature type="binding site" evidence="1">
    <location>
        <position position="83"/>
    </location>
    <ligand>
        <name>Zn(2+)</name>
        <dbReference type="ChEBI" id="CHEBI:29105"/>
        <note>catalytic</note>
    </ligand>
</feature>
<feature type="binding site" evidence="1">
    <location>
        <position position="180"/>
    </location>
    <ligand>
        <name>Zn(2+)</name>
        <dbReference type="ChEBI" id="CHEBI:29105"/>
        <note>catalytic</note>
    </ligand>
</feature>
<feature type="binding site" evidence="1">
    <location>
        <position position="181"/>
    </location>
    <ligand>
        <name>dihydroxyacetone phosphate</name>
        <dbReference type="ChEBI" id="CHEBI:57642"/>
    </ligand>
</feature>
<feature type="binding site" evidence="1">
    <location>
        <position position="208"/>
    </location>
    <ligand>
        <name>Zn(2+)</name>
        <dbReference type="ChEBI" id="CHEBI:29105"/>
        <note>catalytic</note>
    </ligand>
</feature>
<feature type="binding site" evidence="1">
    <location>
        <begin position="209"/>
        <end position="211"/>
    </location>
    <ligand>
        <name>dihydroxyacetone phosphate</name>
        <dbReference type="ChEBI" id="CHEBI:57642"/>
    </ligand>
</feature>
<feature type="binding site" evidence="1">
    <location>
        <begin position="230"/>
        <end position="233"/>
    </location>
    <ligand>
        <name>dihydroxyacetone phosphate</name>
        <dbReference type="ChEBI" id="CHEBI:57642"/>
    </ligand>
</feature>
<dbReference type="EC" id="4.1.2.40" evidence="1"/>
<dbReference type="EMBL" id="CP000468">
    <property type="protein sequence ID" value="ABJ02636.1"/>
    <property type="molecule type" value="Genomic_DNA"/>
</dbReference>
<dbReference type="RefSeq" id="WP_000022766.1">
    <property type="nucleotide sequence ID" value="NZ_CADILS010000003.1"/>
</dbReference>
<dbReference type="SMR" id="A1AG46"/>
<dbReference type="GeneID" id="75203745"/>
<dbReference type="KEGG" id="ecv:APECO1_3290"/>
<dbReference type="HOGENOM" id="CLU_040088_0_1_6"/>
<dbReference type="UniPathway" id="UPA00704">
    <property type="reaction ID" value="UER00716"/>
</dbReference>
<dbReference type="Proteomes" id="UP000008216">
    <property type="component" value="Chromosome"/>
</dbReference>
<dbReference type="GO" id="GO:0005829">
    <property type="term" value="C:cytosol"/>
    <property type="evidence" value="ECO:0007669"/>
    <property type="project" value="TreeGrafter"/>
</dbReference>
<dbReference type="GO" id="GO:0009025">
    <property type="term" value="F:tagatose-bisphosphate aldolase activity"/>
    <property type="evidence" value="ECO:0007669"/>
    <property type="project" value="UniProtKB-UniRule"/>
</dbReference>
<dbReference type="GO" id="GO:0008270">
    <property type="term" value="F:zinc ion binding"/>
    <property type="evidence" value="ECO:0007669"/>
    <property type="project" value="UniProtKB-UniRule"/>
</dbReference>
<dbReference type="GO" id="GO:0005975">
    <property type="term" value="P:carbohydrate metabolic process"/>
    <property type="evidence" value="ECO:0007669"/>
    <property type="project" value="InterPro"/>
</dbReference>
<dbReference type="GO" id="GO:2001059">
    <property type="term" value="P:D-tagatose 6-phosphate catabolic process"/>
    <property type="evidence" value="ECO:0007669"/>
    <property type="project" value="UniProtKB-UniRule"/>
</dbReference>
<dbReference type="CDD" id="cd00453">
    <property type="entry name" value="FTBP_aldolase_II"/>
    <property type="match status" value="1"/>
</dbReference>
<dbReference type="FunFam" id="3.20.20.70:FF:000043">
    <property type="entry name" value="D-tagatose-1,6-bisphosphate aldolase subunit GatY"/>
    <property type="match status" value="1"/>
</dbReference>
<dbReference type="Gene3D" id="3.20.20.70">
    <property type="entry name" value="Aldolase class I"/>
    <property type="match status" value="1"/>
</dbReference>
<dbReference type="HAMAP" id="MF_01293">
    <property type="entry name" value="TagBP_aldolase_KbaY"/>
    <property type="match status" value="1"/>
</dbReference>
<dbReference type="InterPro" id="IPR013785">
    <property type="entry name" value="Aldolase_TIM"/>
</dbReference>
<dbReference type="InterPro" id="IPR050246">
    <property type="entry name" value="Class_II_FBP_aldolase"/>
</dbReference>
<dbReference type="InterPro" id="IPR000771">
    <property type="entry name" value="FBA_II"/>
</dbReference>
<dbReference type="InterPro" id="IPR023788">
    <property type="entry name" value="TagBP_ald_KbaY"/>
</dbReference>
<dbReference type="InterPro" id="IPR011288">
    <property type="entry name" value="TagBP_ald_KbaY/GatY"/>
</dbReference>
<dbReference type="NCBIfam" id="TIGR00167">
    <property type="entry name" value="cbbA"/>
    <property type="match status" value="1"/>
</dbReference>
<dbReference type="NCBIfam" id="NF006626">
    <property type="entry name" value="PRK09195.1"/>
    <property type="match status" value="1"/>
</dbReference>
<dbReference type="NCBIfam" id="NF009374">
    <property type="entry name" value="PRK12737.1"/>
    <property type="match status" value="1"/>
</dbReference>
<dbReference type="NCBIfam" id="NF009375">
    <property type="entry name" value="PRK12738.1"/>
    <property type="match status" value="1"/>
</dbReference>
<dbReference type="NCBIfam" id="TIGR01858">
    <property type="entry name" value="tag_bisphos_ald"/>
    <property type="match status" value="1"/>
</dbReference>
<dbReference type="PANTHER" id="PTHR30304">
    <property type="entry name" value="D-TAGATOSE-1,6-BISPHOSPHATE ALDOLASE"/>
    <property type="match status" value="1"/>
</dbReference>
<dbReference type="PANTHER" id="PTHR30304:SF0">
    <property type="entry name" value="D-TAGATOSE-1,6-BISPHOSPHATE ALDOLASE SUBUNIT GATY-RELATED"/>
    <property type="match status" value="1"/>
</dbReference>
<dbReference type="Pfam" id="PF01116">
    <property type="entry name" value="F_bP_aldolase"/>
    <property type="match status" value="1"/>
</dbReference>
<dbReference type="PIRSF" id="PIRSF001359">
    <property type="entry name" value="F_bP_aldolase_II"/>
    <property type="match status" value="1"/>
</dbReference>
<dbReference type="SUPFAM" id="SSF51569">
    <property type="entry name" value="Aldolase"/>
    <property type="match status" value="1"/>
</dbReference>
<dbReference type="PROSITE" id="PS00602">
    <property type="entry name" value="ALDOLASE_CLASS_II_1"/>
    <property type="match status" value="1"/>
</dbReference>
<dbReference type="PROSITE" id="PS00806">
    <property type="entry name" value="ALDOLASE_CLASS_II_2"/>
    <property type="match status" value="1"/>
</dbReference>
<gene>
    <name evidence="1" type="primary">kbaY</name>
    <name type="ordered locus">Ecok1_31420</name>
    <name type="ORF">APECO1_3290</name>
</gene>
<name>KBAY_ECOK1</name>
<sequence length="286" mass="31294">MSIISTKYLLQDAQANGYAVPAFNIHNAETIQAILEVCSEMRSPVILAGTPGTFKHIALEEIYALCSAYSTTYNMPLALHLDHHESLDDIRRKVHAGVRSAMIDGSHFPFAENVKLVKSVVDFCHSQDCSVEAELGRLGGVEDDMSVDAESAFLTDPQEAKRFVELTGVDSLAVAIGTAHGLYSKTPKIDFQRLAEIREVVDVPLVLHGASDVPDEFVRRTIELGVTKVNVATELKIAFAGAVKAWFAENPQGNDPRYYMRVGMDAMKEVVRNKINVCGSANRISA</sequence>
<evidence type="ECO:0000255" key="1">
    <source>
        <dbReference type="HAMAP-Rule" id="MF_01293"/>
    </source>
</evidence>
<organism>
    <name type="scientific">Escherichia coli O1:K1 / APEC</name>
    <dbReference type="NCBI Taxonomy" id="405955"/>
    <lineage>
        <taxon>Bacteria</taxon>
        <taxon>Pseudomonadati</taxon>
        <taxon>Pseudomonadota</taxon>
        <taxon>Gammaproteobacteria</taxon>
        <taxon>Enterobacterales</taxon>
        <taxon>Enterobacteriaceae</taxon>
        <taxon>Escherichia</taxon>
    </lineage>
</organism>
<protein>
    <recommendedName>
        <fullName evidence="1">D-tagatose-1,6-bisphosphate aldolase subunit KbaY</fullName>
        <shortName evidence="1">TBPA</shortName>
        <shortName evidence="1">TagBP aldolase</shortName>
        <ecNumber evidence="1">4.1.2.40</ecNumber>
    </recommendedName>
    <alternativeName>
        <fullName evidence="1">D-tagatose-bisphosphate aldolase class II</fullName>
    </alternativeName>
    <alternativeName>
        <fullName evidence="1">Ketose 1,6-bisphosphate aldolase class II</fullName>
    </alternativeName>
    <alternativeName>
        <fullName evidence="1">Tagatose-bisphosphate aldolase</fullName>
    </alternativeName>
</protein>
<keyword id="KW-0456">Lyase</keyword>
<keyword id="KW-0479">Metal-binding</keyword>
<keyword id="KW-1185">Reference proteome</keyword>
<keyword id="KW-0862">Zinc</keyword>
<accession>A1AG46</accession>
<reference key="1">
    <citation type="journal article" date="2007" name="J. Bacteriol.">
        <title>The genome sequence of avian pathogenic Escherichia coli strain O1:K1:H7 shares strong similarities with human extraintestinal pathogenic E. coli genomes.</title>
        <authorList>
            <person name="Johnson T.J."/>
            <person name="Kariyawasam S."/>
            <person name="Wannemuehler Y."/>
            <person name="Mangiamele P."/>
            <person name="Johnson S.J."/>
            <person name="Doetkott C."/>
            <person name="Skyberg J.A."/>
            <person name="Lynne A.M."/>
            <person name="Johnson J.R."/>
            <person name="Nolan L.K."/>
        </authorList>
    </citation>
    <scope>NUCLEOTIDE SEQUENCE [LARGE SCALE GENOMIC DNA]</scope>
</reference>